<comment type="function">
    <text evidence="1">Encapsidates the negative strand viral RNA, protecting it from nucleases. The encapsidated genomic RNA is termed the ribonucleoprotein (RNP) and serves as template for transcription and replication. The RNP needs to be localized in the host nucleus to start an infectious cycle, but is too large to diffuse through the nuclear pore complex. NP comprises at least 2 nuclear localization signals that are responsible for the active RNP import into the nucleus through cellular importin alpha/beta pathway. Later in the infection, nclear export of RNPs are mediated through viral proteins NEP interacting with M1 which binds nucleoproteins. It is possible that nucleoprotein binds directly host exportin-1/XPO1 and plays an active role in RNPs nuclear export. M1 interaction with RNP seems to hide nucleoprotein's nuclear localization signals. Soon after a virion infects a new cell, M1 dissociates from the RNP under acidification of the virion driven by M2 protein. Dissociation of M1 from RNP unmasks nucleoprotein's nuclear localization signals, targeting the RNP to the nucleus.</text>
</comment>
<comment type="subunit">
    <text evidence="1">Homomultimerizes to form the nucleocapsid. May bind host exportin-1/XPO1. Binds to viral genomic RNA. Protein-RNA contacts are mediated by a combination of electrostatic interactions between positively charged residues and the phosphate backbone and planar interactions between aromatic side chains and bases.</text>
</comment>
<comment type="subcellular location">
    <subcellularLocation>
        <location evidence="1">Virion</location>
    </subcellularLocation>
    <subcellularLocation>
        <location evidence="1">Host nucleus</location>
    </subcellularLocation>
</comment>
<comment type="PTM">
    <text evidence="1">Late in virus-infected cells, may be cleaved from a 56-kDa protein to a 53-kDa protein by a cellular caspase. This cleavage might be a marker for the onset of apoptosis in infected cells or have a specific function in virus host interaction.</text>
</comment>
<comment type="similarity">
    <text evidence="1">Belongs to the influenza viruses nucleoprotein family.</text>
</comment>
<dbReference type="EMBL" id="D00602">
    <property type="protein sequence ID" value="BAA00478.1"/>
    <property type="molecule type" value="Genomic_RNA"/>
</dbReference>
<dbReference type="PIR" id="H36754">
    <property type="entry name" value="VHIVX5"/>
</dbReference>
<dbReference type="SMR" id="P18072"/>
<dbReference type="GO" id="GO:0019029">
    <property type="term" value="C:helical viral capsid"/>
    <property type="evidence" value="ECO:0007669"/>
    <property type="project" value="UniProtKB-UniRule"/>
</dbReference>
<dbReference type="GO" id="GO:0043657">
    <property type="term" value="C:host cell"/>
    <property type="evidence" value="ECO:0007669"/>
    <property type="project" value="GOC"/>
</dbReference>
<dbReference type="GO" id="GO:0042025">
    <property type="term" value="C:host cell nucleus"/>
    <property type="evidence" value="ECO:0007669"/>
    <property type="project" value="UniProtKB-SubCell"/>
</dbReference>
<dbReference type="GO" id="GO:1990904">
    <property type="term" value="C:ribonucleoprotein complex"/>
    <property type="evidence" value="ECO:0007669"/>
    <property type="project" value="UniProtKB-KW"/>
</dbReference>
<dbReference type="GO" id="GO:0019013">
    <property type="term" value="C:viral nucleocapsid"/>
    <property type="evidence" value="ECO:0007669"/>
    <property type="project" value="UniProtKB-UniRule"/>
</dbReference>
<dbReference type="GO" id="GO:0003723">
    <property type="term" value="F:RNA binding"/>
    <property type="evidence" value="ECO:0007669"/>
    <property type="project" value="UniProtKB-UniRule"/>
</dbReference>
<dbReference type="GO" id="GO:0005198">
    <property type="term" value="F:structural molecule activity"/>
    <property type="evidence" value="ECO:0007669"/>
    <property type="project" value="UniProtKB-UniRule"/>
</dbReference>
<dbReference type="GO" id="GO:0046718">
    <property type="term" value="P:symbiont entry into host cell"/>
    <property type="evidence" value="ECO:0007669"/>
    <property type="project" value="UniProtKB-KW"/>
</dbReference>
<dbReference type="GO" id="GO:0075732">
    <property type="term" value="P:viral penetration into host nucleus"/>
    <property type="evidence" value="ECO:0007669"/>
    <property type="project" value="UniProtKB-UniRule"/>
</dbReference>
<dbReference type="HAMAP" id="MF_04070">
    <property type="entry name" value="INFV_NCAP"/>
    <property type="match status" value="1"/>
</dbReference>
<dbReference type="InterPro" id="IPR002141">
    <property type="entry name" value="Flu_NP"/>
</dbReference>
<dbReference type="Pfam" id="PF00506">
    <property type="entry name" value="Flu_NP"/>
    <property type="match status" value="1"/>
</dbReference>
<dbReference type="SUPFAM" id="SSF161003">
    <property type="entry name" value="flu NP-like"/>
    <property type="match status" value="1"/>
</dbReference>
<feature type="chain" id="PRO_0000079107" description="Nucleoprotein">
    <location>
        <begin position="1"/>
        <end position="498"/>
    </location>
</feature>
<feature type="region of interest" description="Disordered" evidence="2">
    <location>
        <begin position="1"/>
        <end position="21"/>
    </location>
</feature>
<feature type="short sequence motif" description="Unconventional nuclear localization signal" evidence="1">
    <location>
        <begin position="1"/>
        <end position="18"/>
    </location>
</feature>
<feature type="short sequence motif" description="Bipartite nuclear localization signal" evidence="1">
    <location>
        <begin position="198"/>
        <end position="216"/>
    </location>
</feature>
<feature type="compositionally biased region" description="Basic and acidic residues" evidence="2">
    <location>
        <begin position="8"/>
        <end position="21"/>
    </location>
</feature>
<protein>
    <recommendedName>
        <fullName evidence="1">Nucleoprotein</fullName>
    </recommendedName>
    <alternativeName>
        <fullName evidence="1">Nucleocapsid protein</fullName>
        <shortName evidence="1">Protein N</shortName>
    </alternativeName>
</protein>
<gene>
    <name evidence="1" type="primary">NP</name>
</gene>
<accession>P18072</accession>
<organismHost>
    <name type="scientific">Aves</name>
    <dbReference type="NCBI Taxonomy" id="8782"/>
</organismHost>
<organismHost>
    <name type="scientific">Cetacea</name>
    <name type="common">whales</name>
    <dbReference type="NCBI Taxonomy" id="9721"/>
</organismHost>
<organismHost>
    <name type="scientific">Homo sapiens</name>
    <name type="common">Human</name>
    <dbReference type="NCBI Taxonomy" id="9606"/>
</organismHost>
<organismHost>
    <name type="scientific">Phocidae</name>
    <name type="common">true seals</name>
    <dbReference type="NCBI Taxonomy" id="9709"/>
</organismHost>
<organismHost>
    <name type="scientific">Sus scrofa</name>
    <name type="common">Pig</name>
    <dbReference type="NCBI Taxonomy" id="9823"/>
</organismHost>
<name>NCAP_I77AH</name>
<proteinExistence type="inferred from homology"/>
<keyword id="KW-0167">Capsid protein</keyword>
<keyword id="KW-1139">Helical capsid protein</keyword>
<keyword id="KW-1048">Host nucleus</keyword>
<keyword id="KW-0945">Host-virus interaction</keyword>
<keyword id="KW-0687">Ribonucleoprotein</keyword>
<keyword id="KW-0694">RNA-binding</keyword>
<keyword id="KW-0543">Viral nucleoprotein</keyword>
<keyword id="KW-1163">Viral penetration into host nucleus</keyword>
<keyword id="KW-0946">Virion</keyword>
<keyword id="KW-1160">Virus entry into host cell</keyword>
<sequence length="498" mass="56212">MASQGTKRSYEQMETDGERQNATEIRASVGKMIDGIGRFYIQMCTELKLSDYEGRLIQNSLTIERMVLSAFDERRNKYLEEHPSAGKDPKKTGGPIYKRVDGKWMRELVLYDKEEIRRIWRQANNGDDATRGLTHMMIWHSNLNDTTYQRTRALVRTGMDPRMCSLMQGSTLPRRSGAAGAAVKGIGTMVMELIRMIKRGINDRNFWRGENGRKTRSAYERMCNILKGKFQTAAQRAMMDQVRESRNPGNAEIEDLIFSARSALILRGSVAHKSCLPACVYGPAVASGYDFEKEGYSLVGIDPFKLLQNSQVYSLIRPNENPAHKSQLVWMACHSAAFEDLRLLSFIRGTKVSPRGKLSTRGVQIASNENMDTMESSTLELRSRYWAIRTRSGGNTNQQRASAGQISVQPTFSVQRNLPFDKSTIMAAFTGNTEGRTSDMRAEIIRMMEGAKPEEVSFRGRGVFELSDEKATNPIVPSFDMSNEGSYFFGDNAEEYDN</sequence>
<evidence type="ECO:0000255" key="1">
    <source>
        <dbReference type="HAMAP-Rule" id="MF_04070"/>
    </source>
</evidence>
<evidence type="ECO:0000256" key="2">
    <source>
        <dbReference type="SAM" id="MobiDB-lite"/>
    </source>
</evidence>
<organism>
    <name type="scientific">Influenza A virus (strain A/Texas/1/1977 H3N2)</name>
    <dbReference type="NCBI Taxonomy" id="444318"/>
    <lineage>
        <taxon>Viruses</taxon>
        <taxon>Riboviria</taxon>
        <taxon>Orthornavirae</taxon>
        <taxon>Negarnaviricota</taxon>
        <taxon>Polyploviricotina</taxon>
        <taxon>Insthoviricetes</taxon>
        <taxon>Articulavirales</taxon>
        <taxon>Orthomyxoviridae</taxon>
        <taxon>Alphainfluenzavirus</taxon>
        <taxon>Alphainfluenzavirus influenzae</taxon>
        <taxon>Influenza A virus</taxon>
    </lineage>
</organism>
<reference key="1">
    <citation type="journal article" date="1989" name="J. Gen. Virol.">
        <title>Biological and genetic evolution of the nucleoprotein gene of human influenza A viruses.</title>
        <authorList>
            <person name="Altmueller A."/>
            <person name="Fitch W.M."/>
            <person name="Scholtissek C."/>
        </authorList>
    </citation>
    <scope>NUCLEOTIDE SEQUENCE [GENOMIC RNA]</scope>
</reference>